<feature type="chain" id="PRO_0000459405" description="Peptide transporter PTR_C">
    <location>
        <begin position="1"/>
        <end position="569"/>
    </location>
</feature>
<feature type="transmembrane region" description="Helical" evidence="1">
    <location>
        <begin position="54"/>
        <end position="74"/>
    </location>
</feature>
<feature type="transmembrane region" description="Helical" evidence="1">
    <location>
        <begin position="104"/>
        <end position="124"/>
    </location>
</feature>
<feature type="transmembrane region" description="Helical" evidence="1">
    <location>
        <begin position="134"/>
        <end position="154"/>
    </location>
</feature>
<feature type="transmembrane region" description="Helical" evidence="1">
    <location>
        <begin position="159"/>
        <end position="179"/>
    </location>
</feature>
<feature type="transmembrane region" description="Helical" evidence="1">
    <location>
        <begin position="215"/>
        <end position="235"/>
    </location>
</feature>
<feature type="transmembrane region" description="Helical" evidence="1">
    <location>
        <begin position="245"/>
        <end position="265"/>
    </location>
</feature>
<feature type="transmembrane region" description="Helical" evidence="1">
    <location>
        <begin position="322"/>
        <end position="342"/>
    </location>
</feature>
<feature type="transmembrane region" description="Helical" evidence="1">
    <location>
        <begin position="366"/>
        <end position="386"/>
    </location>
</feature>
<feature type="transmembrane region" description="Helical" evidence="1">
    <location>
        <begin position="398"/>
        <end position="418"/>
    </location>
</feature>
<feature type="transmembrane region" description="Helical" evidence="1">
    <location>
        <begin position="444"/>
        <end position="464"/>
    </location>
</feature>
<feature type="transmembrane region" description="Helical" evidence="1">
    <location>
        <begin position="479"/>
        <end position="499"/>
    </location>
</feature>
<feature type="transmembrane region" description="Helical" evidence="1">
    <location>
        <begin position="510"/>
        <end position="530"/>
    </location>
</feature>
<feature type="region of interest" description="Disordered" evidence="3">
    <location>
        <begin position="1"/>
        <end position="43"/>
    </location>
</feature>
<feature type="compositionally biased region" description="Basic and acidic residues" evidence="3">
    <location>
        <begin position="1"/>
        <end position="25"/>
    </location>
</feature>
<feature type="glycosylation site" description="N-linked (GlcNAc...) asparagine" evidence="2">
    <location>
        <position position="98"/>
    </location>
</feature>
<feature type="glycosylation site" description="N-linked (GlcNAc...) asparagine" evidence="2">
    <location>
        <position position="212"/>
    </location>
</feature>
<accession>A0A2H0ZCS5</accession>
<organism>
    <name type="scientific">Candidozyma auris</name>
    <name type="common">Yeast</name>
    <name type="synonym">Candida auris</name>
    <dbReference type="NCBI Taxonomy" id="498019"/>
    <lineage>
        <taxon>Eukaryota</taxon>
        <taxon>Fungi</taxon>
        <taxon>Dikarya</taxon>
        <taxon>Ascomycota</taxon>
        <taxon>Saccharomycotina</taxon>
        <taxon>Pichiomycetes</taxon>
        <taxon>Metschnikowiaceae</taxon>
        <taxon>Candidozyma</taxon>
    </lineage>
</organism>
<dbReference type="EMBL" id="PEKT02000010">
    <property type="protein sequence ID" value="PIS48431.1"/>
    <property type="molecule type" value="Genomic_DNA"/>
</dbReference>
<dbReference type="SMR" id="A0A2H0ZCS5"/>
<dbReference type="EnsemblFungi" id="B9J08_005124-t37_1">
    <property type="protein sequence ID" value="B9J08_005124-t37_1-p1"/>
    <property type="gene ID" value="B9J08_005124"/>
</dbReference>
<dbReference type="VEuPathDB" id="FungiDB:B9J08_005124"/>
<dbReference type="VEuPathDB" id="FungiDB:CJI96_0003913"/>
<dbReference type="VEuPathDB" id="FungiDB:CJI97_005208"/>
<dbReference type="VEuPathDB" id="FungiDB:CJJ07_004589"/>
<dbReference type="VEuPathDB" id="FungiDB:CJJ09_004230"/>
<dbReference type="VEuPathDB" id="FungiDB:QG37_01303"/>
<dbReference type="OMA" id="QYFFIGC"/>
<dbReference type="GO" id="GO:0005886">
    <property type="term" value="C:plasma membrane"/>
    <property type="evidence" value="ECO:0007669"/>
    <property type="project" value="UniProtKB-SubCell"/>
</dbReference>
<dbReference type="GO" id="GO:0022857">
    <property type="term" value="F:transmembrane transporter activity"/>
    <property type="evidence" value="ECO:0007669"/>
    <property type="project" value="InterPro"/>
</dbReference>
<dbReference type="GO" id="GO:0006857">
    <property type="term" value="P:oligopeptide transport"/>
    <property type="evidence" value="ECO:0007669"/>
    <property type="project" value="InterPro"/>
</dbReference>
<dbReference type="GO" id="GO:0015031">
    <property type="term" value="P:protein transport"/>
    <property type="evidence" value="ECO:0007669"/>
    <property type="project" value="UniProtKB-KW"/>
</dbReference>
<dbReference type="FunFam" id="1.20.1250.20:FF:000085">
    <property type="entry name" value="MFS peptide transporter Ptr2"/>
    <property type="match status" value="1"/>
</dbReference>
<dbReference type="Gene3D" id="1.20.1250.20">
    <property type="entry name" value="MFS general substrate transporter like domains"/>
    <property type="match status" value="1"/>
</dbReference>
<dbReference type="InterPro" id="IPR036259">
    <property type="entry name" value="MFS_trans_sf"/>
</dbReference>
<dbReference type="InterPro" id="IPR000109">
    <property type="entry name" value="POT_fam"/>
</dbReference>
<dbReference type="InterPro" id="IPR018456">
    <property type="entry name" value="PTR2_symporter_CS"/>
</dbReference>
<dbReference type="PANTHER" id="PTHR11654">
    <property type="entry name" value="OLIGOPEPTIDE TRANSPORTER-RELATED"/>
    <property type="match status" value="1"/>
</dbReference>
<dbReference type="Pfam" id="PF00854">
    <property type="entry name" value="PTR2"/>
    <property type="match status" value="1"/>
</dbReference>
<dbReference type="SUPFAM" id="SSF103473">
    <property type="entry name" value="MFS general substrate transporter"/>
    <property type="match status" value="1"/>
</dbReference>
<dbReference type="PROSITE" id="PS01023">
    <property type="entry name" value="PTR2_2"/>
    <property type="match status" value="1"/>
</dbReference>
<evidence type="ECO:0000255" key="1"/>
<evidence type="ECO:0000255" key="2">
    <source>
        <dbReference type="PROSITE-ProRule" id="PRU00498"/>
    </source>
</evidence>
<evidence type="ECO:0000256" key="3">
    <source>
        <dbReference type="SAM" id="MobiDB-lite"/>
    </source>
</evidence>
<evidence type="ECO:0000269" key="4">
    <source>
    </source>
</evidence>
<evidence type="ECO:0000303" key="5">
    <source>
    </source>
</evidence>
<evidence type="ECO:0000305" key="6"/>
<evidence type="ECO:0000305" key="7">
    <source>
    </source>
</evidence>
<comment type="function">
    <text evidence="4">Peptide transporter that exploits the inwardly directed proton motive force to facilitate the cellular uptake of di/tripeptides (PubMed:35648145). Shows strong uptake specificity towards the dipeptides Tyr-Phe and Leu-Gly and the tripeptide Phe-Gly-Gly, when compared to PTR_A and PTR_B (PubMed:35648145). Also able to import peptide-based antifungals such as the peptide-nucleoside drug nikkomycin Z as well as the glucosamine-6-phosphate synthase inhibitor, L-norvalyl-N3-(4-methoxyfumaroyl)-L-2,3-diaminopropionoic acid (Nva-FMDP) (PubMed:35648145).</text>
</comment>
<comment type="catalytic activity">
    <reaction evidence="4">
        <text>a dipeptide(out) + H(+)(out) = a dipeptide(in) + H(+)(in)</text>
        <dbReference type="Rhea" id="RHEA:64392"/>
        <dbReference type="ChEBI" id="CHEBI:15378"/>
        <dbReference type="ChEBI" id="CHEBI:90799"/>
    </reaction>
    <physiologicalReaction direction="left-to-right" evidence="4">
        <dbReference type="Rhea" id="RHEA:64393"/>
    </physiologicalReaction>
</comment>
<comment type="catalytic activity">
    <reaction evidence="4">
        <text>an L-amino acid tripeptide(out) + H(+)(out) = an L-amino acid tripeptide(in) + H(+)(in)</text>
        <dbReference type="Rhea" id="RHEA:64400"/>
        <dbReference type="ChEBI" id="CHEBI:15378"/>
        <dbReference type="ChEBI" id="CHEBI:155837"/>
    </reaction>
    <physiologicalReaction direction="left-to-right" evidence="4">
        <dbReference type="Rhea" id="RHEA:64401"/>
    </physiologicalReaction>
</comment>
<comment type="subcellular location">
    <subcellularLocation>
        <location evidence="7">Cell membrane</location>
        <topology evidence="1">Multi-pass membrane protein</topology>
    </subcellularLocation>
</comment>
<comment type="disruption phenotype">
    <text evidence="4">Leads to a marked reduction in the transport capabilities of di/tripeptides (PubMed:35648145). Results in increased resistance toward the peptide-nucleoside drug nikkomycin Z as well as the glucosamine-6-phosphate synthase inhibitor, L-norvalyl-N3-(4-methoxyfumaroyl)-L-2,3-diaminopropionoic acid (Nva-FMDP) (PubMed:35648145).</text>
</comment>
<comment type="similarity">
    <text evidence="6">Belongs to the major facilitator superfamily. Proton-dependent oligopeptide transporter (POT/PTR) (TC 2.A.17) family.</text>
</comment>
<reference key="1">
    <citation type="journal article" date="2017" name="Clin. Infect. Dis.">
        <title>Simultaneous emergence of multidrug-resistant Candida auris on 3 continents confirmed by whole-genome sequencing and epidemiological analyses.</title>
        <authorList>
            <person name="Lockhart S.R."/>
            <person name="Etienne K.A."/>
            <person name="Vallabhaneni S."/>
            <person name="Farooqi J."/>
            <person name="Chowdhary A."/>
            <person name="Govender N.P."/>
            <person name="Colombo A.L."/>
            <person name="Calvo B."/>
            <person name="Cuomo C.A."/>
            <person name="Desjardins C.A."/>
            <person name="Berkow E.L."/>
            <person name="Castanheira M."/>
            <person name="Magobo R.E."/>
            <person name="Jabeen K."/>
            <person name="Asghar R.J."/>
            <person name="Meis J.F."/>
            <person name="Jackson B."/>
            <person name="Chiller T."/>
            <person name="Litvintseva A.P."/>
        </authorList>
    </citation>
    <scope>NUCLEOTIDE SEQUENCE [LARGE SCALE GENOMIC DNA]</scope>
    <source>
        <strain>B8441</strain>
    </source>
</reference>
<reference key="2">
    <citation type="journal article" date="2022" name="Appl. Microbiol. Biotechnol.">
        <title>Genome-wide analysis of PTR transporters in Candida species and their functional characterization in Candida auris.</title>
        <authorList>
            <person name="Khatoon R."/>
            <person name="Sharma S."/>
            <person name="Prasad R."/>
            <person name="Lynn A.M."/>
            <person name="Prakash A."/>
            <person name="Banerjee A."/>
        </authorList>
    </citation>
    <scope>FUNCTION</scope>
    <scope>TRANSPORTER ACTIVITY</scope>
    <scope>DISRUPTION PHENOTYPE</scope>
</reference>
<proteinExistence type="inferred from homology"/>
<sequence length="569" mass="64006">MSQNVDEKVVHDDASVIRSVDRSESDSYPDSVSPEGAEPSEEEMKTLRRVARRVPLACWLVAIVELAERFSYYGLSTPFQNYMQYTKTDHPRGVLGLNQSGATALSYFWQFWCYVTPIFGAWVADTYLGKYNTISIFCVLYIIGILILFVTSLPSMSQNTSLGGFITAVIVIGIGTGGVKSNVSPLIADQVPKEKPSIKVLKSGERVIEDPNLTIQNVFMFFYLMINIGSLSVIATTELESRVDFWAAYLLPLCFFVIALLALFLGKKVYHKVPVGDKVIAKSFKCSFLALTKLNYDAARPSLNPDKEFPWTDKFVDEVQRALYACKVFLIYPIYWLVYGQMTNNFVSSAGQMELHGLPNDILQAIDSITIIIFIPICESIVYPFIRRFTPFRAITKIFWGFMFGAAAMVYAAVLQHFIYKAGPCYDSPNDCPGFKNIPNHIHVALQTPAYFLIAISEILASITGLEYAYTKAPVSMKSFIMSIFLVQNAFGSALGIALSPVSKDPKMVWTYTGLAVSCFIAGWVFWFLFKHYNDREDKWNDLDYEQDDGYNGELEPVVSLTRSFKDMS</sequence>
<protein>
    <recommendedName>
        <fullName evidence="5">Peptide transporter PTR_C</fullName>
    </recommendedName>
</protein>
<name>PTRC_CANAR</name>
<gene>
    <name evidence="5" type="primary">PTR_C</name>
    <name type="ORF">B9J08_005124</name>
</gene>
<keyword id="KW-1003">Cell membrane</keyword>
<keyword id="KW-0325">Glycoprotein</keyword>
<keyword id="KW-0472">Membrane</keyword>
<keyword id="KW-0571">Peptide transport</keyword>
<keyword id="KW-0653">Protein transport</keyword>
<keyword id="KW-0812">Transmembrane</keyword>
<keyword id="KW-1133">Transmembrane helix</keyword>
<keyword id="KW-0813">Transport</keyword>